<comment type="function">
    <text evidence="1">Bidirectionally degrades single-stranded DNA into large acid-insoluble oligonucleotides, which are then degraded further into small acid-soluble oligonucleotides.</text>
</comment>
<comment type="catalytic activity">
    <reaction evidence="1">
        <text>Exonucleolytic cleavage in either 5'- to 3'- or 3'- to 5'-direction to yield nucleoside 5'-phosphates.</text>
        <dbReference type="EC" id="3.1.11.6"/>
    </reaction>
</comment>
<comment type="subunit">
    <text evidence="1">Heterooligomer composed of large and small subunits.</text>
</comment>
<comment type="subcellular location">
    <subcellularLocation>
        <location evidence="1">Cytoplasm</location>
    </subcellularLocation>
</comment>
<comment type="similarity">
    <text evidence="1">Belongs to the XseA family.</text>
</comment>
<dbReference type="EC" id="3.1.11.6" evidence="1"/>
<dbReference type="EMBL" id="AM260525">
    <property type="protein sequence ID" value="CAK02136.1"/>
    <property type="molecule type" value="Genomic_DNA"/>
</dbReference>
<dbReference type="RefSeq" id="WP_012232214.1">
    <property type="nucleotide sequence ID" value="NC_010161.1"/>
</dbReference>
<dbReference type="SMR" id="A9IXA1"/>
<dbReference type="KEGG" id="btr:BT_1859"/>
<dbReference type="eggNOG" id="COG1570">
    <property type="taxonomic scope" value="Bacteria"/>
</dbReference>
<dbReference type="HOGENOM" id="CLU_023625_3_1_5"/>
<dbReference type="Proteomes" id="UP000001592">
    <property type="component" value="Chromosome"/>
</dbReference>
<dbReference type="GO" id="GO:0005737">
    <property type="term" value="C:cytoplasm"/>
    <property type="evidence" value="ECO:0007669"/>
    <property type="project" value="UniProtKB-SubCell"/>
</dbReference>
<dbReference type="GO" id="GO:0009318">
    <property type="term" value="C:exodeoxyribonuclease VII complex"/>
    <property type="evidence" value="ECO:0007669"/>
    <property type="project" value="InterPro"/>
</dbReference>
<dbReference type="GO" id="GO:0008855">
    <property type="term" value="F:exodeoxyribonuclease VII activity"/>
    <property type="evidence" value="ECO:0007669"/>
    <property type="project" value="UniProtKB-UniRule"/>
</dbReference>
<dbReference type="GO" id="GO:0003676">
    <property type="term" value="F:nucleic acid binding"/>
    <property type="evidence" value="ECO:0007669"/>
    <property type="project" value="InterPro"/>
</dbReference>
<dbReference type="GO" id="GO:0006308">
    <property type="term" value="P:DNA catabolic process"/>
    <property type="evidence" value="ECO:0007669"/>
    <property type="project" value="UniProtKB-UniRule"/>
</dbReference>
<dbReference type="CDD" id="cd04489">
    <property type="entry name" value="ExoVII_LU_OBF"/>
    <property type="match status" value="1"/>
</dbReference>
<dbReference type="HAMAP" id="MF_00378">
    <property type="entry name" value="Exonuc_7_L"/>
    <property type="match status" value="1"/>
</dbReference>
<dbReference type="InterPro" id="IPR003753">
    <property type="entry name" value="Exonuc_VII_L"/>
</dbReference>
<dbReference type="InterPro" id="IPR020579">
    <property type="entry name" value="Exonuc_VII_lsu_C"/>
</dbReference>
<dbReference type="InterPro" id="IPR025824">
    <property type="entry name" value="OB-fold_nuc-bd_dom"/>
</dbReference>
<dbReference type="NCBIfam" id="TIGR00237">
    <property type="entry name" value="xseA"/>
    <property type="match status" value="1"/>
</dbReference>
<dbReference type="PANTHER" id="PTHR30008">
    <property type="entry name" value="EXODEOXYRIBONUCLEASE 7 LARGE SUBUNIT"/>
    <property type="match status" value="1"/>
</dbReference>
<dbReference type="PANTHER" id="PTHR30008:SF0">
    <property type="entry name" value="EXODEOXYRIBONUCLEASE 7 LARGE SUBUNIT"/>
    <property type="match status" value="1"/>
</dbReference>
<dbReference type="Pfam" id="PF02601">
    <property type="entry name" value="Exonuc_VII_L"/>
    <property type="match status" value="1"/>
</dbReference>
<dbReference type="Pfam" id="PF13742">
    <property type="entry name" value="tRNA_anti_2"/>
    <property type="match status" value="1"/>
</dbReference>
<keyword id="KW-0963">Cytoplasm</keyword>
<keyword id="KW-0269">Exonuclease</keyword>
<keyword id="KW-0378">Hydrolase</keyword>
<keyword id="KW-0540">Nuclease</keyword>
<reference key="1">
    <citation type="journal article" date="2007" name="Nat. Genet.">
        <title>Genomic analysis of Bartonella identifies type IV secretion systems as host adaptability factors.</title>
        <authorList>
            <person name="Saenz H.L."/>
            <person name="Engel P."/>
            <person name="Stoeckli M.C."/>
            <person name="Lanz C."/>
            <person name="Raddatz G."/>
            <person name="Vayssier-Taussat M."/>
            <person name="Birtles R."/>
            <person name="Schuster S.C."/>
            <person name="Dehio C."/>
        </authorList>
    </citation>
    <scope>NUCLEOTIDE SEQUENCE [LARGE SCALE GENOMIC DNA]</scope>
    <source>
        <strain>CIP 105476 / IBS 506</strain>
    </source>
</reference>
<name>EX7L_BART1</name>
<feature type="chain" id="PRO_1000079974" description="Exodeoxyribonuclease 7 large subunit">
    <location>
        <begin position="1"/>
        <end position="476"/>
    </location>
</feature>
<organism>
    <name type="scientific">Bartonella tribocorum (strain CIP 105476 / IBS 506)</name>
    <dbReference type="NCBI Taxonomy" id="382640"/>
    <lineage>
        <taxon>Bacteria</taxon>
        <taxon>Pseudomonadati</taxon>
        <taxon>Pseudomonadota</taxon>
        <taxon>Alphaproteobacteria</taxon>
        <taxon>Hyphomicrobiales</taxon>
        <taxon>Bartonellaceae</taxon>
        <taxon>Bartonella</taxon>
    </lineage>
</organism>
<proteinExistence type="inferred from homology"/>
<evidence type="ECO:0000255" key="1">
    <source>
        <dbReference type="HAMAP-Rule" id="MF_00378"/>
    </source>
</evidence>
<sequence>MVNLLSEKTSGTNVAEFTVSEIAGALKRVVEEKFGYVRVRGEISGYRGAHASGHAYFALKDDKARLEAVIWRGVMEKLKFPPEEGMEVVAVGKLTTYPGSSKYQIVIEALEPTGVGALMTLLENRKKKFAEEGLFDEAKKKPLPYMPRIIGVVTSPTGAVIRDIIHRISDRFPLHVLVWPVRVQGETSGSEVAAAVEGFNALASEGHIPKPDLIIVARGGGSLEDLWGFNDEAVVRAVYASDLPIISAVGHETDWTLIDYVADWRAPTPTGAAEKAVPVKLDLEVCVASLGARLRKGLARSFDFHQQKLCAARRGLPSADQLFSLPRRGFDEISSRLQRALCVSYDKKRFSFHALHLRLSPRLLKSEKAQRHTKEYTARLYRAFMRSVEKKRSALELACRLLKSTSYQNILERGFVLVLGQNHKPIKRLAQFPESGQINLRFFDGDIHVATQEPFSAARSKHKKIKSPSDDQGTLF</sequence>
<gene>
    <name evidence="1" type="primary">xseA</name>
    <name type="ordered locus">BT_1859</name>
</gene>
<accession>A9IXA1</accession>
<protein>
    <recommendedName>
        <fullName evidence="1">Exodeoxyribonuclease 7 large subunit</fullName>
        <ecNumber evidence="1">3.1.11.6</ecNumber>
    </recommendedName>
    <alternativeName>
        <fullName evidence="1">Exodeoxyribonuclease VII large subunit</fullName>
        <shortName evidence="1">Exonuclease VII large subunit</shortName>
    </alternativeName>
</protein>